<evidence type="ECO:0000255" key="1">
    <source>
        <dbReference type="HAMAP-Rule" id="MF_01720"/>
    </source>
</evidence>
<organism>
    <name type="scientific">Salmonella typhimurium (strain LT2 / SGSC1412 / ATCC 700720)</name>
    <dbReference type="NCBI Taxonomy" id="99287"/>
    <lineage>
        <taxon>Bacteria</taxon>
        <taxon>Pseudomonadati</taxon>
        <taxon>Pseudomonadota</taxon>
        <taxon>Gammaproteobacteria</taxon>
        <taxon>Enterobacterales</taxon>
        <taxon>Enterobacteriaceae</taxon>
        <taxon>Salmonella</taxon>
    </lineage>
</organism>
<dbReference type="EC" id="7.6.2.-" evidence="1"/>
<dbReference type="EMBL" id="AE006468">
    <property type="protein sequence ID" value="AAL19878.1"/>
    <property type="molecule type" value="Genomic_DNA"/>
</dbReference>
<dbReference type="RefSeq" id="WP_000125877.1">
    <property type="nucleotide sequence ID" value="NC_003197.2"/>
</dbReference>
<dbReference type="SMR" id="Q8ZQE4"/>
<dbReference type="STRING" id="99287.STM0942"/>
<dbReference type="PaxDb" id="99287-STM0942"/>
<dbReference type="KEGG" id="stm:STM0942"/>
<dbReference type="PATRIC" id="fig|99287.12.peg.993"/>
<dbReference type="HOGENOM" id="CLU_000604_78_3_6"/>
<dbReference type="OMA" id="RINFKVI"/>
<dbReference type="PhylomeDB" id="Q8ZQE4"/>
<dbReference type="BioCyc" id="SENT99287:STM0942-MONOMER"/>
<dbReference type="PHI-base" id="PHI:3928"/>
<dbReference type="Proteomes" id="UP000001014">
    <property type="component" value="Chromosome"/>
</dbReference>
<dbReference type="GO" id="GO:0005886">
    <property type="term" value="C:plasma membrane"/>
    <property type="evidence" value="ECO:0000318"/>
    <property type="project" value="GO_Central"/>
</dbReference>
<dbReference type="GO" id="GO:0005524">
    <property type="term" value="F:ATP binding"/>
    <property type="evidence" value="ECO:0007669"/>
    <property type="project" value="UniProtKB-KW"/>
</dbReference>
<dbReference type="GO" id="GO:0016887">
    <property type="term" value="F:ATP hydrolysis activity"/>
    <property type="evidence" value="ECO:0007669"/>
    <property type="project" value="InterPro"/>
</dbReference>
<dbReference type="GO" id="GO:0022857">
    <property type="term" value="F:transmembrane transporter activity"/>
    <property type="evidence" value="ECO:0000318"/>
    <property type="project" value="GO_Central"/>
</dbReference>
<dbReference type="GO" id="GO:0046677">
    <property type="term" value="P:response to antibiotic"/>
    <property type="evidence" value="ECO:0007669"/>
    <property type="project" value="UniProtKB-KW"/>
</dbReference>
<dbReference type="CDD" id="cd03255">
    <property type="entry name" value="ABC_MJ0796_LolCDE_FtsE"/>
    <property type="match status" value="1"/>
</dbReference>
<dbReference type="FunFam" id="3.40.50.300:FF:000032">
    <property type="entry name" value="Export ABC transporter ATP-binding protein"/>
    <property type="match status" value="1"/>
</dbReference>
<dbReference type="Gene3D" id="3.40.50.300">
    <property type="entry name" value="P-loop containing nucleotide triphosphate hydrolases"/>
    <property type="match status" value="1"/>
</dbReference>
<dbReference type="InterPro" id="IPR003593">
    <property type="entry name" value="AAA+_ATPase"/>
</dbReference>
<dbReference type="InterPro" id="IPR003838">
    <property type="entry name" value="ABC3_permease_C"/>
</dbReference>
<dbReference type="InterPro" id="IPR003439">
    <property type="entry name" value="ABC_transporter-like_ATP-bd"/>
</dbReference>
<dbReference type="InterPro" id="IPR017871">
    <property type="entry name" value="ABC_transporter-like_CS"/>
</dbReference>
<dbReference type="InterPro" id="IPR017911">
    <property type="entry name" value="MacB-like_ATP-bd"/>
</dbReference>
<dbReference type="InterPro" id="IPR025857">
    <property type="entry name" value="MacB_PCD"/>
</dbReference>
<dbReference type="InterPro" id="IPR050250">
    <property type="entry name" value="Macrolide_Exporter_MacB"/>
</dbReference>
<dbReference type="InterPro" id="IPR027417">
    <property type="entry name" value="P-loop_NTPase"/>
</dbReference>
<dbReference type="NCBIfam" id="NF007826">
    <property type="entry name" value="PRK10535.1"/>
    <property type="match status" value="1"/>
</dbReference>
<dbReference type="PANTHER" id="PTHR30572:SF7">
    <property type="entry name" value="MACROLIDE EXPORT ATP-BINDING_PERMEASE PROTEIN MACB"/>
    <property type="match status" value="1"/>
</dbReference>
<dbReference type="PANTHER" id="PTHR30572">
    <property type="entry name" value="MEMBRANE COMPONENT OF TRANSPORTER-RELATED"/>
    <property type="match status" value="1"/>
</dbReference>
<dbReference type="Pfam" id="PF00005">
    <property type="entry name" value="ABC_tran"/>
    <property type="match status" value="1"/>
</dbReference>
<dbReference type="Pfam" id="PF02687">
    <property type="entry name" value="FtsX"/>
    <property type="match status" value="1"/>
</dbReference>
<dbReference type="Pfam" id="PF12704">
    <property type="entry name" value="MacB_PCD"/>
    <property type="match status" value="1"/>
</dbReference>
<dbReference type="SMART" id="SM00382">
    <property type="entry name" value="AAA"/>
    <property type="match status" value="1"/>
</dbReference>
<dbReference type="SUPFAM" id="SSF52540">
    <property type="entry name" value="P-loop containing nucleoside triphosphate hydrolases"/>
    <property type="match status" value="1"/>
</dbReference>
<dbReference type="PROSITE" id="PS00211">
    <property type="entry name" value="ABC_TRANSPORTER_1"/>
    <property type="match status" value="1"/>
</dbReference>
<dbReference type="PROSITE" id="PS50893">
    <property type="entry name" value="ABC_TRANSPORTER_2"/>
    <property type="match status" value="1"/>
</dbReference>
<dbReference type="PROSITE" id="PS51267">
    <property type="entry name" value="MACB"/>
    <property type="match status" value="1"/>
</dbReference>
<protein>
    <recommendedName>
        <fullName evidence="1">Macrolide export ATP-binding/permease protein MacB</fullName>
        <ecNumber evidence="1">7.6.2.-</ecNumber>
    </recommendedName>
</protein>
<sequence length="648" mass="70769">MTALLELCNVSRSYPSGEEQVAVLKDISLQIHAGEMVAIVGVSGSGKSTLMNILGCLDKPTSGTYRVAGRDVSTLDPDALAQLRREHFGFIFQRYHLLSHLTAAQNVEIPAVYAGIERKKRQARARELLLRLGLSDRVDYPPSQLSGGQQQRVSIARALMNGGQVILADEPTGALDSHSGEEVMAILRQLRDRGHTVIIVTHDPLIAAQAERIIEIHDGKIVHNPPAQEKKREQGVDAAVVNTAPGWRQFASSFREALSMAWLAMAANKMRTLLTMLGIIIGIASVVSIVVVGDAAKQMVLADIRAMGTNTIDIHPGKDFGDDNPQYRQALKYDDLVAIQKQPWVNSATPSVSKSLRLRYGNIDIAVNANGVSGDYFNVYGMSFREGNTFNAVQQQDRAQVVVLDANTRRQLFPNKANVVGEVVLAGNMPVIVIGVAEEKPSMYGNSNLLQVWLPYSTMSDRIMGQSWLNSITVRVKDGVDSDQAEQQLTRLLTLRHGKKDFFTWNMDSVLKTAEKTTYTLQLFLTLVAVISLVVGGIGVMNIMLVSVTERTREIGIRMAVGARASDVLQQFLIEAVLVCLVGGALGISLSMFIAFMLQLFLPGWEIGFSLTALASAFLCSTFTGILFGWLPARNAARLDPVDALARE</sequence>
<reference key="1">
    <citation type="journal article" date="2001" name="Nature">
        <title>Complete genome sequence of Salmonella enterica serovar Typhimurium LT2.</title>
        <authorList>
            <person name="McClelland M."/>
            <person name="Sanderson K.E."/>
            <person name="Spieth J."/>
            <person name="Clifton S.W."/>
            <person name="Latreille P."/>
            <person name="Courtney L."/>
            <person name="Porwollik S."/>
            <person name="Ali J."/>
            <person name="Dante M."/>
            <person name="Du F."/>
            <person name="Hou S."/>
            <person name="Layman D."/>
            <person name="Leonard S."/>
            <person name="Nguyen C."/>
            <person name="Scott K."/>
            <person name="Holmes A."/>
            <person name="Grewal N."/>
            <person name="Mulvaney E."/>
            <person name="Ryan E."/>
            <person name="Sun H."/>
            <person name="Florea L."/>
            <person name="Miller W."/>
            <person name="Stoneking T."/>
            <person name="Nhan M."/>
            <person name="Waterston R."/>
            <person name="Wilson R.K."/>
        </authorList>
    </citation>
    <scope>NUCLEOTIDE SEQUENCE [LARGE SCALE GENOMIC DNA]</scope>
    <source>
        <strain>LT2 / SGSC1412 / ATCC 700720</strain>
    </source>
</reference>
<keyword id="KW-0046">Antibiotic resistance</keyword>
<keyword id="KW-0067">ATP-binding</keyword>
<keyword id="KW-0997">Cell inner membrane</keyword>
<keyword id="KW-1003">Cell membrane</keyword>
<keyword id="KW-0472">Membrane</keyword>
<keyword id="KW-0547">Nucleotide-binding</keyword>
<keyword id="KW-1185">Reference proteome</keyword>
<keyword id="KW-1278">Translocase</keyword>
<keyword id="KW-0812">Transmembrane</keyword>
<keyword id="KW-1133">Transmembrane helix</keyword>
<keyword id="KW-0813">Transport</keyword>
<gene>
    <name evidence="1" type="primary">macB</name>
    <name type="ordered locus">STM0942</name>
</gene>
<name>MACB_SALTY</name>
<accession>Q8ZQE4</accession>
<comment type="function">
    <text evidence="1">Part of the tripartite efflux system MacAB-TolC. MacB is a non-canonical ABC transporter that contains transmembrane domains (TMD), which form a pore in the inner membrane, and an ATP-binding domain (NBD), which is responsible for energy generation. Confers resistance against macrolides.</text>
</comment>
<comment type="subunit">
    <text evidence="1">Homodimer. Part of the tripartite efflux system MacAB-TolC, which is composed of an inner membrane transporter, MacB, a periplasmic membrane fusion protein, MacA, and an outer membrane component, TolC. The complex forms a large protein conduit and can translocate molecules across both the inner and outer membranes. Interacts with MacA.</text>
</comment>
<comment type="subcellular location">
    <subcellularLocation>
        <location evidence="1">Cell inner membrane</location>
        <topology evidence="1">Multi-pass membrane protein</topology>
    </subcellularLocation>
</comment>
<comment type="similarity">
    <text evidence="1">Belongs to the ABC transporter superfamily. Macrolide exporter (TC 3.A.1.122) family.</text>
</comment>
<proteinExistence type="inferred from homology"/>
<feature type="chain" id="PRO_0000269977" description="Macrolide export ATP-binding/permease protein MacB">
    <location>
        <begin position="1"/>
        <end position="648"/>
    </location>
</feature>
<feature type="transmembrane region" description="Helical" evidence="1">
    <location>
        <begin position="273"/>
        <end position="293"/>
    </location>
</feature>
<feature type="transmembrane region" description="Helical" evidence="1">
    <location>
        <begin position="417"/>
        <end position="437"/>
    </location>
</feature>
<feature type="transmembrane region" description="Helical" evidence="1">
    <location>
        <begin position="523"/>
        <end position="543"/>
    </location>
</feature>
<feature type="transmembrane region" description="Helical" evidence="1">
    <location>
        <begin position="577"/>
        <end position="597"/>
    </location>
</feature>
<feature type="transmembrane region" description="Helical" evidence="1">
    <location>
        <begin position="611"/>
        <end position="631"/>
    </location>
</feature>
<feature type="domain" description="ABC transporter" evidence="1">
    <location>
        <begin position="5"/>
        <end position="243"/>
    </location>
</feature>
<feature type="binding site" evidence="1">
    <location>
        <begin position="41"/>
        <end position="48"/>
    </location>
    <ligand>
        <name>ATP</name>
        <dbReference type="ChEBI" id="CHEBI:30616"/>
    </ligand>
</feature>